<proteinExistence type="inferred from homology"/>
<evidence type="ECO:0000255" key="1">
    <source>
        <dbReference type="HAMAP-Rule" id="MF_01233"/>
    </source>
</evidence>
<evidence type="ECO:0000305" key="2"/>
<accession>A9R8E7</accession>
<protein>
    <recommendedName>
        <fullName evidence="1">HTH-type transcriptional regulator HdfR</fullName>
    </recommendedName>
    <alternativeName>
        <fullName evidence="1">H-NS-dependent flhDC regulator</fullName>
    </alternativeName>
</protein>
<comment type="function">
    <text evidence="1">Negatively regulates the transcription of the flagellar master operon flhDC by binding to the upstream region of the operon.</text>
</comment>
<comment type="similarity">
    <text evidence="2">Belongs to the LysR transcriptional regulatory family.</text>
</comment>
<keyword id="KW-0238">DNA-binding</keyword>
<keyword id="KW-0678">Repressor</keyword>
<keyword id="KW-0804">Transcription</keyword>
<keyword id="KW-0805">Transcription regulation</keyword>
<sequence>MDTELLKTFLEVSRTRHFGRAAESLYLTQSAVSFRIRQLENQLGANLFTRHRNNIRLTPAGERLVPYAEMLLNTWRLAKKEVIHSLQHTELSIGATASLWEAYLTPWLQQLYEQQEELRLEARIALRNSLVKQLHERQLDLLITTEPPKMDELACLLLGHFSLRLYSSFSLDLPKEDDTPNEHKNASEVPYIKLEWGADFHQQENRLLDSEQAPILTTTSAHLTRQLLETTGGCAFLPEHWQKEYPQLVIHPDIPPIVRPLYAVWLQNSDQQALIRQLLKTPMNNATQSVTRE</sequence>
<organism>
    <name type="scientific">Yersinia pestis bv. Antiqua (strain Angola)</name>
    <dbReference type="NCBI Taxonomy" id="349746"/>
    <lineage>
        <taxon>Bacteria</taxon>
        <taxon>Pseudomonadati</taxon>
        <taxon>Pseudomonadota</taxon>
        <taxon>Gammaproteobacteria</taxon>
        <taxon>Enterobacterales</taxon>
        <taxon>Yersiniaceae</taxon>
        <taxon>Yersinia</taxon>
    </lineage>
</organism>
<name>HDFR_YERPG</name>
<dbReference type="EMBL" id="CP000901">
    <property type="protein sequence ID" value="ABX87320.1"/>
    <property type="molecule type" value="Genomic_DNA"/>
</dbReference>
<dbReference type="RefSeq" id="WP_002212020.1">
    <property type="nucleotide sequence ID" value="NZ_CP009935.1"/>
</dbReference>
<dbReference type="SMR" id="A9R8E7"/>
<dbReference type="GeneID" id="57974802"/>
<dbReference type="KEGG" id="ypg:YpAngola_A0478"/>
<dbReference type="PATRIC" id="fig|349746.12.peg.1428"/>
<dbReference type="GO" id="GO:0003677">
    <property type="term" value="F:DNA binding"/>
    <property type="evidence" value="ECO:0007669"/>
    <property type="project" value="UniProtKB-KW"/>
</dbReference>
<dbReference type="GO" id="GO:0003700">
    <property type="term" value="F:DNA-binding transcription factor activity"/>
    <property type="evidence" value="ECO:0007669"/>
    <property type="project" value="UniProtKB-UniRule"/>
</dbReference>
<dbReference type="GO" id="GO:0045892">
    <property type="term" value="P:negative regulation of DNA-templated transcription"/>
    <property type="evidence" value="ECO:0007669"/>
    <property type="project" value="UniProtKB-UniRule"/>
</dbReference>
<dbReference type="CDD" id="cd05466">
    <property type="entry name" value="PBP2_LTTR_substrate"/>
    <property type="match status" value="1"/>
</dbReference>
<dbReference type="FunFam" id="1.10.10.10:FF:000001">
    <property type="entry name" value="LysR family transcriptional regulator"/>
    <property type="match status" value="1"/>
</dbReference>
<dbReference type="Gene3D" id="3.40.190.10">
    <property type="entry name" value="Periplasmic binding protein-like II"/>
    <property type="match status" value="2"/>
</dbReference>
<dbReference type="Gene3D" id="1.10.10.10">
    <property type="entry name" value="Winged helix-like DNA-binding domain superfamily/Winged helix DNA-binding domain"/>
    <property type="match status" value="1"/>
</dbReference>
<dbReference type="HAMAP" id="MF_01233">
    <property type="entry name" value="HTH_type_HdfR"/>
    <property type="match status" value="1"/>
</dbReference>
<dbReference type="InterPro" id="IPR050176">
    <property type="entry name" value="LTTR"/>
</dbReference>
<dbReference type="InterPro" id="IPR005119">
    <property type="entry name" value="LysR_subst-bd"/>
</dbReference>
<dbReference type="InterPro" id="IPR020890">
    <property type="entry name" value="Tscrpt_reg_HTH_HdfR"/>
</dbReference>
<dbReference type="InterPro" id="IPR000847">
    <property type="entry name" value="Tscrpt_reg_HTH_LysR"/>
</dbReference>
<dbReference type="InterPro" id="IPR036388">
    <property type="entry name" value="WH-like_DNA-bd_sf"/>
</dbReference>
<dbReference type="InterPro" id="IPR036390">
    <property type="entry name" value="WH_DNA-bd_sf"/>
</dbReference>
<dbReference type="NCBIfam" id="NF002946">
    <property type="entry name" value="PRK03601.1"/>
    <property type="match status" value="1"/>
</dbReference>
<dbReference type="PANTHER" id="PTHR30579:SF8">
    <property type="entry name" value="HTH-TYPE TRANSCRIPTIONAL REGULATOR HDFR"/>
    <property type="match status" value="1"/>
</dbReference>
<dbReference type="PANTHER" id="PTHR30579">
    <property type="entry name" value="TRANSCRIPTIONAL REGULATOR"/>
    <property type="match status" value="1"/>
</dbReference>
<dbReference type="Pfam" id="PF00126">
    <property type="entry name" value="HTH_1"/>
    <property type="match status" value="1"/>
</dbReference>
<dbReference type="Pfam" id="PF03466">
    <property type="entry name" value="LysR_substrate"/>
    <property type="match status" value="1"/>
</dbReference>
<dbReference type="PRINTS" id="PR00039">
    <property type="entry name" value="HTHLYSR"/>
</dbReference>
<dbReference type="SUPFAM" id="SSF53850">
    <property type="entry name" value="Periplasmic binding protein-like II"/>
    <property type="match status" value="1"/>
</dbReference>
<dbReference type="SUPFAM" id="SSF46785">
    <property type="entry name" value="Winged helix' DNA-binding domain"/>
    <property type="match status" value="1"/>
</dbReference>
<dbReference type="PROSITE" id="PS50931">
    <property type="entry name" value="HTH_LYSR"/>
    <property type="match status" value="1"/>
</dbReference>
<gene>
    <name evidence="1" type="primary">hdfR</name>
    <name type="ordered locus">YpAngola_A0478</name>
</gene>
<feature type="chain" id="PRO_1000139679" description="HTH-type transcriptional regulator HdfR">
    <location>
        <begin position="1"/>
        <end position="293"/>
    </location>
</feature>
<feature type="domain" description="HTH lysR-type" evidence="1">
    <location>
        <begin position="1"/>
        <end position="58"/>
    </location>
</feature>
<feature type="DNA-binding region" description="H-T-H motif" evidence="1">
    <location>
        <begin position="18"/>
        <end position="37"/>
    </location>
</feature>
<reference key="1">
    <citation type="journal article" date="2010" name="J. Bacteriol.">
        <title>Genome sequence of the deep-rooted Yersinia pestis strain Angola reveals new insights into the evolution and pangenome of the plague bacterium.</title>
        <authorList>
            <person name="Eppinger M."/>
            <person name="Worsham P.L."/>
            <person name="Nikolich M.P."/>
            <person name="Riley D.R."/>
            <person name="Sebastian Y."/>
            <person name="Mou S."/>
            <person name="Achtman M."/>
            <person name="Lindler L.E."/>
            <person name="Ravel J."/>
        </authorList>
    </citation>
    <scope>NUCLEOTIDE SEQUENCE [LARGE SCALE GENOMIC DNA]</scope>
    <source>
        <strain>Angola</strain>
    </source>
</reference>